<feature type="chain" id="PRO_1000026632" description="Phosphatidylserine decarboxylase beta chain" evidence="1">
    <location>
        <begin position="1"/>
        <end position="181"/>
    </location>
</feature>
<feature type="chain" id="PRO_1000026633" description="Phosphatidylserine decarboxylase alpha chain" evidence="1">
    <location>
        <begin position="182"/>
        <end position="214"/>
    </location>
</feature>
<feature type="active site" description="Schiff-base intermediate with substrate; via pyruvic acid" evidence="1">
    <location>
        <position position="182"/>
    </location>
</feature>
<feature type="site" description="Cleavage (non-hydrolytic); by autocatalysis" evidence="1">
    <location>
        <begin position="181"/>
        <end position="182"/>
    </location>
</feature>
<feature type="modified residue" description="Pyruvic acid (Ser); by autocatalysis" evidence="1">
    <location>
        <position position="182"/>
    </location>
</feature>
<proteinExistence type="inferred from homology"/>
<comment type="function">
    <text evidence="1">Catalyzes the formation of phosphatidylethanolamine (PtdEtn) from phosphatidylserine (PtdSer).</text>
</comment>
<comment type="catalytic activity">
    <reaction evidence="1">
        <text>a 1,2-diacyl-sn-glycero-3-phospho-L-serine + H(+) = a 1,2-diacyl-sn-glycero-3-phosphoethanolamine + CO2</text>
        <dbReference type="Rhea" id="RHEA:20828"/>
        <dbReference type="ChEBI" id="CHEBI:15378"/>
        <dbReference type="ChEBI" id="CHEBI:16526"/>
        <dbReference type="ChEBI" id="CHEBI:57262"/>
        <dbReference type="ChEBI" id="CHEBI:64612"/>
        <dbReference type="EC" id="4.1.1.65"/>
    </reaction>
</comment>
<comment type="cofactor">
    <cofactor evidence="1">
        <name>pyruvate</name>
        <dbReference type="ChEBI" id="CHEBI:15361"/>
    </cofactor>
    <text evidence="1">Binds 1 pyruvoyl group covalently per subunit.</text>
</comment>
<comment type="pathway">
    <text evidence="1">Phospholipid metabolism; phosphatidylethanolamine biosynthesis; phosphatidylethanolamine from CDP-diacylglycerol: step 2/2.</text>
</comment>
<comment type="subunit">
    <text evidence="1">Heterodimer of a large membrane-associated beta subunit and a small pyruvoyl-containing alpha subunit.</text>
</comment>
<comment type="subcellular location">
    <subcellularLocation>
        <location evidence="1">Cell membrane</location>
        <topology evidence="1">Peripheral membrane protein</topology>
    </subcellularLocation>
</comment>
<comment type="PTM">
    <text evidence="1">Is synthesized initially as an inactive proenzyme. Formation of the active enzyme involves a self-maturation process in which the active site pyruvoyl group is generated from an internal serine residue via an autocatalytic post-translational modification. Two non-identical subunits are generated from the proenzyme in this reaction, and the pyruvate is formed at the N-terminus of the alpha chain, which is derived from the carboxyl end of the proenzyme. The post-translation cleavage follows an unusual pathway, termed non-hydrolytic serinolysis, in which the side chain hydroxyl group of the serine supplies its oxygen atom to form the C-terminus of the beta chain, while the remainder of the serine residue undergoes an oxidative deamination to produce ammonia and the pyruvoyl prosthetic group on the alpha chain.</text>
</comment>
<comment type="similarity">
    <text evidence="1">Belongs to the phosphatidylserine decarboxylase family. PSD-A subfamily.</text>
</comment>
<name>PSD_BURCH</name>
<sequence>MNYPHPIIAREGWPFIAIAAVVALLIHAVGGFGFAWPFWLLLVFVVQFFRDPQRPIPAQPNAVLCPADGRIVAVETAQDPYANREALKISVFMNVFNVHSQRSPVDGAISKVEYFPGAFLNAAIDKASTENERNAVVIQTASGKTVTSVQIAGLIARRILCYVRAGEPLSRGQRYGFIRFGSRVDVYLPLGSRAKVSIGEKVYASSTILAELEQ</sequence>
<gene>
    <name evidence="1" type="primary">psd</name>
    <name type="ordered locus">Bcen2424_2262</name>
</gene>
<organism>
    <name type="scientific">Burkholderia cenocepacia (strain HI2424)</name>
    <dbReference type="NCBI Taxonomy" id="331272"/>
    <lineage>
        <taxon>Bacteria</taxon>
        <taxon>Pseudomonadati</taxon>
        <taxon>Pseudomonadota</taxon>
        <taxon>Betaproteobacteria</taxon>
        <taxon>Burkholderiales</taxon>
        <taxon>Burkholderiaceae</taxon>
        <taxon>Burkholderia</taxon>
        <taxon>Burkholderia cepacia complex</taxon>
    </lineage>
</organism>
<protein>
    <recommendedName>
        <fullName evidence="1">Phosphatidylserine decarboxylase proenzyme</fullName>
        <ecNumber evidence="1">4.1.1.65</ecNumber>
    </recommendedName>
    <component>
        <recommendedName>
            <fullName evidence="1">Phosphatidylserine decarboxylase alpha chain</fullName>
        </recommendedName>
    </component>
    <component>
        <recommendedName>
            <fullName evidence="1">Phosphatidylserine decarboxylase beta chain</fullName>
        </recommendedName>
    </component>
</protein>
<evidence type="ECO:0000255" key="1">
    <source>
        <dbReference type="HAMAP-Rule" id="MF_00664"/>
    </source>
</evidence>
<keyword id="KW-1003">Cell membrane</keyword>
<keyword id="KW-0210">Decarboxylase</keyword>
<keyword id="KW-0444">Lipid biosynthesis</keyword>
<keyword id="KW-0443">Lipid metabolism</keyword>
<keyword id="KW-0456">Lyase</keyword>
<keyword id="KW-0472">Membrane</keyword>
<keyword id="KW-0594">Phospholipid biosynthesis</keyword>
<keyword id="KW-1208">Phospholipid metabolism</keyword>
<keyword id="KW-0670">Pyruvate</keyword>
<keyword id="KW-0865">Zymogen</keyword>
<dbReference type="EC" id="4.1.1.65" evidence="1"/>
<dbReference type="EMBL" id="CP000458">
    <property type="protein sequence ID" value="ABK09013.1"/>
    <property type="molecule type" value="Genomic_DNA"/>
</dbReference>
<dbReference type="RefSeq" id="WP_006478253.1">
    <property type="nucleotide sequence ID" value="NC_008542.1"/>
</dbReference>
<dbReference type="KEGG" id="bch:Bcen2424_2262"/>
<dbReference type="HOGENOM" id="CLU_072492_0_0_4"/>
<dbReference type="UniPathway" id="UPA00558">
    <property type="reaction ID" value="UER00616"/>
</dbReference>
<dbReference type="GO" id="GO:0005886">
    <property type="term" value="C:plasma membrane"/>
    <property type="evidence" value="ECO:0007669"/>
    <property type="project" value="UniProtKB-SubCell"/>
</dbReference>
<dbReference type="GO" id="GO:0004609">
    <property type="term" value="F:phosphatidylserine decarboxylase activity"/>
    <property type="evidence" value="ECO:0007669"/>
    <property type="project" value="UniProtKB-UniRule"/>
</dbReference>
<dbReference type="GO" id="GO:0006646">
    <property type="term" value="P:phosphatidylethanolamine biosynthetic process"/>
    <property type="evidence" value="ECO:0007669"/>
    <property type="project" value="UniProtKB-UniRule"/>
</dbReference>
<dbReference type="HAMAP" id="MF_00664">
    <property type="entry name" value="PS_decarb_PSD_A"/>
    <property type="match status" value="1"/>
</dbReference>
<dbReference type="InterPro" id="IPR003817">
    <property type="entry name" value="PS_Dcarbxylase"/>
</dbReference>
<dbReference type="InterPro" id="IPR033175">
    <property type="entry name" value="PSD-A"/>
</dbReference>
<dbReference type="NCBIfam" id="TIGR00164">
    <property type="entry name" value="AS_decarb"/>
    <property type="match status" value="1"/>
</dbReference>
<dbReference type="NCBIfam" id="NF003678">
    <property type="entry name" value="PRK05305.1-2"/>
    <property type="match status" value="1"/>
</dbReference>
<dbReference type="NCBIfam" id="NF003680">
    <property type="entry name" value="PRK05305.1-5"/>
    <property type="match status" value="1"/>
</dbReference>
<dbReference type="NCBIfam" id="NF003685">
    <property type="entry name" value="PRK05305.2-5"/>
    <property type="match status" value="1"/>
</dbReference>
<dbReference type="PANTHER" id="PTHR35809">
    <property type="entry name" value="ARCHAETIDYLSERINE DECARBOXYLASE PROENZYME-RELATED"/>
    <property type="match status" value="1"/>
</dbReference>
<dbReference type="PANTHER" id="PTHR35809:SF1">
    <property type="entry name" value="ARCHAETIDYLSERINE DECARBOXYLASE PROENZYME-RELATED"/>
    <property type="match status" value="1"/>
</dbReference>
<dbReference type="Pfam" id="PF02666">
    <property type="entry name" value="PS_Dcarbxylase"/>
    <property type="match status" value="1"/>
</dbReference>
<accession>A0K936</accession>
<reference key="1">
    <citation type="submission" date="2006-08" db="EMBL/GenBank/DDBJ databases">
        <title>Complete sequence of chromosome 1 of Burkholderia cenocepacia HI2424.</title>
        <authorList>
            <person name="Copeland A."/>
            <person name="Lucas S."/>
            <person name="Lapidus A."/>
            <person name="Barry K."/>
            <person name="Detter J.C."/>
            <person name="Glavina del Rio T."/>
            <person name="Hammon N."/>
            <person name="Israni S."/>
            <person name="Pitluck S."/>
            <person name="Chain P."/>
            <person name="Malfatti S."/>
            <person name="Shin M."/>
            <person name="Vergez L."/>
            <person name="Schmutz J."/>
            <person name="Larimer F."/>
            <person name="Land M."/>
            <person name="Hauser L."/>
            <person name="Kyrpides N."/>
            <person name="Kim E."/>
            <person name="LiPuma J.J."/>
            <person name="Gonzalez C.F."/>
            <person name="Konstantinidis K."/>
            <person name="Tiedje J.M."/>
            <person name="Richardson P."/>
        </authorList>
    </citation>
    <scope>NUCLEOTIDE SEQUENCE [LARGE SCALE GENOMIC DNA]</scope>
    <source>
        <strain>HI2424</strain>
    </source>
</reference>